<gene>
    <name type="primary">HPR-A</name>
</gene>
<comment type="catalytic activity">
    <reaction>
        <text>(R)-glycerate + NAD(+) = 3-hydroxypyruvate + NADH + H(+)</text>
        <dbReference type="Rhea" id="RHEA:17905"/>
        <dbReference type="ChEBI" id="CHEBI:15378"/>
        <dbReference type="ChEBI" id="CHEBI:16659"/>
        <dbReference type="ChEBI" id="CHEBI:17180"/>
        <dbReference type="ChEBI" id="CHEBI:57540"/>
        <dbReference type="ChEBI" id="CHEBI:57945"/>
        <dbReference type="EC" id="1.1.1.29"/>
    </reaction>
</comment>
<comment type="pathway">
    <text>Photosynthesis; photorespiration; 3-phospho-D-glycerate from glycine: step 3/4.</text>
</comment>
<comment type="subcellular location">
    <subcellularLocation>
        <location>Peroxisome</location>
    </subcellularLocation>
</comment>
<comment type="induction">
    <text>The appearance of HPR in the cotyledons of cucumber seedlings is both developmentally and light-regulated possibly at the level of transcription.</text>
</comment>
<comment type="similarity">
    <text evidence="2">Belongs to the D-isomer specific 2-hydroxyacid dehydrogenase family.</text>
</comment>
<dbReference type="EC" id="1.1.1.29"/>
<dbReference type="EMBL" id="X14609">
    <property type="protein sequence ID" value="CAA32764.1"/>
    <property type="molecule type" value="mRNA"/>
</dbReference>
<dbReference type="EMBL" id="X58542">
    <property type="protein sequence ID" value="CAA41434.1"/>
    <property type="molecule type" value="Genomic_DNA"/>
</dbReference>
<dbReference type="PIR" id="S17733">
    <property type="entry name" value="DEKVG"/>
</dbReference>
<dbReference type="RefSeq" id="NP_001267567.1">
    <property type="nucleotide sequence ID" value="NM_001280638.1"/>
</dbReference>
<dbReference type="SMR" id="P13443"/>
<dbReference type="EnsemblPlants" id="KGN43256">
    <property type="protein sequence ID" value="KGN43256"/>
    <property type="gene ID" value="Csa_7G012940"/>
</dbReference>
<dbReference type="GeneID" id="101209132"/>
<dbReference type="Gramene" id="KGN43256">
    <property type="protein sequence ID" value="KGN43256"/>
    <property type="gene ID" value="Csa_7G012940"/>
</dbReference>
<dbReference type="KEGG" id="csv:101209132"/>
<dbReference type="eggNOG" id="KOG0069">
    <property type="taxonomic scope" value="Eukaryota"/>
</dbReference>
<dbReference type="OMA" id="VNPMFRV"/>
<dbReference type="OrthoDB" id="9991913at2759"/>
<dbReference type="UniPathway" id="UPA00951">
    <property type="reaction ID" value="UER00916"/>
</dbReference>
<dbReference type="GO" id="GO:0005777">
    <property type="term" value="C:peroxisome"/>
    <property type="evidence" value="ECO:0007669"/>
    <property type="project" value="UniProtKB-SubCell"/>
</dbReference>
<dbReference type="GO" id="GO:0008465">
    <property type="term" value="F:hydroxypyruvate reductase (NADH) activity"/>
    <property type="evidence" value="ECO:0007669"/>
    <property type="project" value="UniProtKB-EC"/>
</dbReference>
<dbReference type="GO" id="GO:0051287">
    <property type="term" value="F:NAD binding"/>
    <property type="evidence" value="ECO:0007669"/>
    <property type="project" value="InterPro"/>
</dbReference>
<dbReference type="GO" id="GO:0009854">
    <property type="term" value="P:oxidative photosynthetic carbon pathway"/>
    <property type="evidence" value="ECO:0007669"/>
    <property type="project" value="UniProtKB-KW"/>
</dbReference>
<dbReference type="CDD" id="cd05301">
    <property type="entry name" value="GDH"/>
    <property type="match status" value="1"/>
</dbReference>
<dbReference type="FunFam" id="3.40.50.720:FF:000207">
    <property type="entry name" value="Glycerate dehydrogenase HPR, peroxisomal"/>
    <property type="match status" value="1"/>
</dbReference>
<dbReference type="Gene3D" id="3.40.50.720">
    <property type="entry name" value="NAD(P)-binding Rossmann-like Domain"/>
    <property type="match status" value="2"/>
</dbReference>
<dbReference type="InterPro" id="IPR050223">
    <property type="entry name" value="D-isomer_2-hydroxyacid_DH"/>
</dbReference>
<dbReference type="InterPro" id="IPR006139">
    <property type="entry name" value="D-isomer_2_OHA_DH_cat_dom"/>
</dbReference>
<dbReference type="InterPro" id="IPR029753">
    <property type="entry name" value="D-isomer_DH_CS"/>
</dbReference>
<dbReference type="InterPro" id="IPR029752">
    <property type="entry name" value="D-isomer_DH_CS1"/>
</dbReference>
<dbReference type="InterPro" id="IPR006140">
    <property type="entry name" value="D-isomer_DH_NAD-bd"/>
</dbReference>
<dbReference type="InterPro" id="IPR036291">
    <property type="entry name" value="NAD(P)-bd_dom_sf"/>
</dbReference>
<dbReference type="PANTHER" id="PTHR10996">
    <property type="entry name" value="2-HYDROXYACID DEHYDROGENASE-RELATED"/>
    <property type="match status" value="1"/>
</dbReference>
<dbReference type="PANTHER" id="PTHR10996:SF257">
    <property type="entry name" value="GLYOXYLATE REDUCTASE 1"/>
    <property type="match status" value="1"/>
</dbReference>
<dbReference type="Pfam" id="PF00389">
    <property type="entry name" value="2-Hacid_dh"/>
    <property type="match status" value="1"/>
</dbReference>
<dbReference type="Pfam" id="PF02826">
    <property type="entry name" value="2-Hacid_dh_C"/>
    <property type="match status" value="1"/>
</dbReference>
<dbReference type="SUPFAM" id="SSF52283">
    <property type="entry name" value="Formate/glycerate dehydrogenase catalytic domain-like"/>
    <property type="match status" value="1"/>
</dbReference>
<dbReference type="SUPFAM" id="SSF51735">
    <property type="entry name" value="NAD(P)-binding Rossmann-fold domains"/>
    <property type="match status" value="1"/>
</dbReference>
<dbReference type="PROSITE" id="PS00065">
    <property type="entry name" value="D_2_HYDROXYACID_DH_1"/>
    <property type="match status" value="1"/>
</dbReference>
<dbReference type="PROSITE" id="PS00671">
    <property type="entry name" value="D_2_HYDROXYACID_DH_3"/>
    <property type="match status" value="1"/>
</dbReference>
<proteinExistence type="evidence at transcript level"/>
<accession>P13443</accession>
<evidence type="ECO:0000250" key="1"/>
<evidence type="ECO:0000305" key="2"/>
<protein>
    <recommendedName>
        <fullName>Glycerate dehydrogenase</fullName>
        <shortName>GDH</shortName>
        <ecNumber>1.1.1.29</ecNumber>
    </recommendedName>
    <alternativeName>
        <fullName>NADH-dependent hydroxypyruvate reductase</fullName>
        <shortName>HPR</shortName>
    </alternativeName>
</protein>
<feature type="chain" id="PRO_0000075941" description="Glycerate dehydrogenase">
    <location>
        <begin position="1"/>
        <end position="382"/>
    </location>
</feature>
<feature type="active site" evidence="1">
    <location>
        <position position="273"/>
    </location>
</feature>
<feature type="active site" evidence="1">
    <location>
        <position position="302"/>
    </location>
</feature>
<feature type="active site" description="Proton donor" evidence="1">
    <location>
        <position position="320"/>
    </location>
</feature>
<feature type="binding site" evidence="1">
    <location>
        <begin position="175"/>
        <end position="176"/>
    </location>
    <ligand>
        <name>NAD(+)</name>
        <dbReference type="ChEBI" id="CHEBI:57540"/>
    </ligand>
</feature>
<feature type="binding site" evidence="1">
    <location>
        <begin position="271"/>
        <end position="273"/>
    </location>
    <ligand>
        <name>NAD(+)</name>
        <dbReference type="ChEBI" id="CHEBI:57540"/>
    </ligand>
</feature>
<feature type="binding site" evidence="1">
    <location>
        <position position="297"/>
    </location>
    <ligand>
        <name>NAD(+)</name>
        <dbReference type="ChEBI" id="CHEBI:57540"/>
    </ligand>
</feature>
<feature type="binding site" evidence="1">
    <location>
        <begin position="320"/>
        <end position="323"/>
    </location>
    <ligand>
        <name>NAD(+)</name>
        <dbReference type="ChEBI" id="CHEBI:57540"/>
    </ligand>
</feature>
<name>DHGY_CUCSA</name>
<sequence length="382" mass="41706">MAKPVQIEVWNPNGKYRVVSTKPMPGTRWINLLIEQDCRVEICTEKKTILSVEDILALIGDKCDGVIGQLTEDWGEVLFSALSRAGGKAFSNMAVGYNNVDVNAANKYGVAVGNTPGVLTETTAELAASLSLAAARRIVEADEFMRAGRYDGWLPNLFVGNLLKGQTVGVIGAGRIGSAYARMMVEGFKMNLIYFDLYQSTRLEKFVTAYGEFLKANGEAPVTWRRASSMDEVLREADVISLHPVLDKTTFHLVNKESLKAMKKDAILINCSRGPVIDEAALVDHLRDNPMFRVGLDVFEDEPYMKPGLADMKNAIIVPHIASASKWTREGMATLAALNVLGKIKGYPVWSDPNRVEPFLDENVSPPAASPSIVNAKALGNA</sequence>
<reference key="1">
    <citation type="journal article" date="1989" name="Plant Mol. Biol.">
        <title>Isolation, characterization and sequence analysis of a full-length cDNA clone encoding NADH-dependent hydroxypyruvate reductase from cucumber.</title>
        <authorList>
            <person name="Greenler J.M."/>
            <person name="Sloan J.S."/>
            <person name="Schwartz B.W."/>
            <person name="Becker W.M."/>
        </authorList>
    </citation>
    <scope>NUCLEOTIDE SEQUENCE [MRNA]</scope>
    <source>
        <strain>cv. Improved long green</strain>
        <tissue>Cotyledon</tissue>
    </source>
</reference>
<reference key="2">
    <citation type="journal article" date="1991" name="Plant Mol. Biol.">
        <title>Characterization of genes encoding hydroxypyruvate reductase in cucumber.</title>
        <authorList>
            <person name="Schwartz B.W."/>
            <person name="Sloan J.S."/>
            <person name="Becker W.M."/>
        </authorList>
    </citation>
    <scope>NUCLEOTIDE SEQUENCE [GENOMIC DNA]</scope>
    <source>
        <strain>cv. Wisconsin 2238G</strain>
    </source>
</reference>
<keyword id="KW-0323">Glycolate pathway</keyword>
<keyword id="KW-0520">NAD</keyword>
<keyword id="KW-0560">Oxidoreductase</keyword>
<keyword id="KW-0576">Peroxisome</keyword>
<keyword id="KW-0601">Photorespiration</keyword>
<organism>
    <name type="scientific">Cucumis sativus</name>
    <name type="common">Cucumber</name>
    <dbReference type="NCBI Taxonomy" id="3659"/>
    <lineage>
        <taxon>Eukaryota</taxon>
        <taxon>Viridiplantae</taxon>
        <taxon>Streptophyta</taxon>
        <taxon>Embryophyta</taxon>
        <taxon>Tracheophyta</taxon>
        <taxon>Spermatophyta</taxon>
        <taxon>Magnoliopsida</taxon>
        <taxon>eudicotyledons</taxon>
        <taxon>Gunneridae</taxon>
        <taxon>Pentapetalae</taxon>
        <taxon>rosids</taxon>
        <taxon>fabids</taxon>
        <taxon>Cucurbitales</taxon>
        <taxon>Cucurbitaceae</taxon>
        <taxon>Benincaseae</taxon>
        <taxon>Cucumis</taxon>
    </lineage>
</organism>